<proteinExistence type="inferred from homology"/>
<organism>
    <name type="scientific">Argas monolakensis</name>
    <name type="common">Mono lake bird tick</name>
    <dbReference type="NCBI Taxonomy" id="34602"/>
    <lineage>
        <taxon>Eukaryota</taxon>
        <taxon>Metazoa</taxon>
        <taxon>Ecdysozoa</taxon>
        <taxon>Arthropoda</taxon>
        <taxon>Chelicerata</taxon>
        <taxon>Arachnida</taxon>
        <taxon>Acari</taxon>
        <taxon>Parasitiformes</taxon>
        <taxon>Ixodida</taxon>
        <taxon>Ixodoidea</taxon>
        <taxon>Argasidae</taxon>
        <taxon>Argasinae</taxon>
        <taxon>Argas</taxon>
    </lineage>
</organism>
<comment type="subcellular location">
    <subcellularLocation>
        <location evidence="4">Membrane</location>
        <topology evidence="4">Single-pass membrane protein</topology>
    </subcellularLocation>
</comment>
<comment type="similarity">
    <text evidence="4">Belongs to the SMCO4 family.</text>
</comment>
<gene>
    <name evidence="3" type="ORF">AM-292</name>
</gene>
<sequence length="59" mass="6863">MAGRNKAKPRLSKKEKEERRKDMAEVQEKVFSVVVPVVVAFTVVIMLIVYLKTRPRTDF</sequence>
<name>SMCO4_ARGMO</name>
<dbReference type="EMBL" id="DQ886829">
    <property type="protein sequence ID" value="ABI52746.1"/>
    <property type="molecule type" value="mRNA"/>
</dbReference>
<dbReference type="SMR" id="Q09JL7"/>
<dbReference type="GO" id="GO:0016020">
    <property type="term" value="C:membrane"/>
    <property type="evidence" value="ECO:0007669"/>
    <property type="project" value="UniProtKB-SubCell"/>
</dbReference>
<dbReference type="InterPro" id="IPR027960">
    <property type="entry name" value="DUF4519"/>
</dbReference>
<dbReference type="PANTHER" id="PTHR34644">
    <property type="entry name" value="SINGLE-PASS MEMBRANE AND COILED-COIL DOMAIN-CONTAINING PROTEIN 4"/>
    <property type="match status" value="1"/>
</dbReference>
<dbReference type="PANTHER" id="PTHR34644:SF2">
    <property type="entry name" value="SINGLE-PASS MEMBRANE AND COILED-COIL DOMAIN-CONTAINING PROTEIN 4"/>
    <property type="match status" value="1"/>
</dbReference>
<dbReference type="Pfam" id="PF15012">
    <property type="entry name" value="DUF4519"/>
    <property type="match status" value="1"/>
</dbReference>
<feature type="chain" id="PRO_0000365550" description="Single-pass membrane and coiled-coil domain-containing protein 4 homolog">
    <location>
        <begin position="1"/>
        <end position="59"/>
    </location>
</feature>
<feature type="transmembrane region" description="Helical" evidence="1">
    <location>
        <begin position="30"/>
        <end position="50"/>
    </location>
</feature>
<feature type="region of interest" description="Disordered" evidence="2">
    <location>
        <begin position="1"/>
        <end position="20"/>
    </location>
</feature>
<feature type="coiled-coil region" evidence="1">
    <location>
        <begin position="10"/>
        <end position="30"/>
    </location>
</feature>
<feature type="compositionally biased region" description="Basic residues" evidence="2">
    <location>
        <begin position="1"/>
        <end position="11"/>
    </location>
</feature>
<reference evidence="5" key="1">
    <citation type="journal article" date="2008" name="Insect Biochem. Mol. Biol.">
        <title>Comparative sialomics between hard and soft ticks: implications for the evolution of blood-feeding behavior.</title>
        <authorList>
            <person name="Mans B.J."/>
            <person name="Andersen J.F."/>
            <person name="Francischetti I.M."/>
            <person name="Valenzuela J.G."/>
            <person name="Schwan T.G."/>
            <person name="Pham V.M."/>
            <person name="Garfield M.K."/>
            <person name="Hammer C.H."/>
            <person name="Ribeiro J.M.C."/>
        </authorList>
    </citation>
    <scope>NUCLEOTIDE SEQUENCE [LARGE SCALE MRNA]</scope>
    <source>
        <tissue>Salivary gland</tissue>
    </source>
</reference>
<accession>Q09JL7</accession>
<keyword id="KW-0175">Coiled coil</keyword>
<keyword id="KW-0472">Membrane</keyword>
<keyword id="KW-0812">Transmembrane</keyword>
<keyword id="KW-1133">Transmembrane helix</keyword>
<protein>
    <recommendedName>
        <fullName>Single-pass membrane and coiled-coil domain-containing protein 4 homolog</fullName>
    </recommendedName>
</protein>
<evidence type="ECO:0000255" key="1"/>
<evidence type="ECO:0000256" key="2">
    <source>
        <dbReference type="SAM" id="MobiDB-lite"/>
    </source>
</evidence>
<evidence type="ECO:0000303" key="3">
    <source>
    </source>
</evidence>
<evidence type="ECO:0000305" key="4"/>
<evidence type="ECO:0000312" key="5">
    <source>
        <dbReference type="EMBL" id="ABI52746.1"/>
    </source>
</evidence>